<feature type="chain" id="PRO_0000286244" description="Spermidine/putrescine import ATP-binding protein PotA">
    <location>
        <begin position="1"/>
        <end position="366"/>
    </location>
</feature>
<feature type="domain" description="ABC transporter" evidence="1">
    <location>
        <begin position="8"/>
        <end position="239"/>
    </location>
</feature>
<feature type="binding site" evidence="1">
    <location>
        <begin position="41"/>
        <end position="48"/>
    </location>
    <ligand>
        <name>ATP</name>
        <dbReference type="ChEBI" id="CHEBI:30616"/>
    </ligand>
</feature>
<dbReference type="EC" id="7.6.2.11" evidence="1"/>
<dbReference type="EMBL" id="AL591976">
    <property type="protein sequence ID" value="CAC98885.1"/>
    <property type="status" value="ALT_INIT"/>
    <property type="molecule type" value="Genomic_DNA"/>
</dbReference>
<dbReference type="PIR" id="AG1175">
    <property type="entry name" value="AG1175"/>
</dbReference>
<dbReference type="RefSeq" id="NP_464334.1">
    <property type="nucleotide sequence ID" value="NC_003210.1"/>
</dbReference>
<dbReference type="SMR" id="Q8Y8T6"/>
<dbReference type="STRING" id="169963.gene:17593458"/>
<dbReference type="PaxDb" id="169963-lmo0807"/>
<dbReference type="EnsemblBacteria" id="CAC98885">
    <property type="protein sequence ID" value="CAC98885"/>
    <property type="gene ID" value="CAC98885"/>
</dbReference>
<dbReference type="GeneID" id="985403"/>
<dbReference type="KEGG" id="lmo:lmo0807"/>
<dbReference type="PATRIC" id="fig|169963.11.peg.830"/>
<dbReference type="eggNOG" id="COG3842">
    <property type="taxonomic scope" value="Bacteria"/>
</dbReference>
<dbReference type="HOGENOM" id="CLU_000604_1_1_9"/>
<dbReference type="OrthoDB" id="9790614at2"/>
<dbReference type="PhylomeDB" id="Q8Y8T6"/>
<dbReference type="Proteomes" id="UP000000817">
    <property type="component" value="Chromosome"/>
</dbReference>
<dbReference type="GO" id="GO:0043190">
    <property type="term" value="C:ATP-binding cassette (ABC) transporter complex"/>
    <property type="evidence" value="ECO:0007669"/>
    <property type="project" value="InterPro"/>
</dbReference>
<dbReference type="GO" id="GO:0015594">
    <property type="term" value="F:ABC-type putrescine transporter activity"/>
    <property type="evidence" value="ECO:0007669"/>
    <property type="project" value="InterPro"/>
</dbReference>
<dbReference type="GO" id="GO:0005524">
    <property type="term" value="F:ATP binding"/>
    <property type="evidence" value="ECO:0007669"/>
    <property type="project" value="UniProtKB-KW"/>
</dbReference>
<dbReference type="GO" id="GO:0016887">
    <property type="term" value="F:ATP hydrolysis activity"/>
    <property type="evidence" value="ECO:0007669"/>
    <property type="project" value="InterPro"/>
</dbReference>
<dbReference type="CDD" id="cd03300">
    <property type="entry name" value="ABC_PotA_N"/>
    <property type="match status" value="1"/>
</dbReference>
<dbReference type="FunFam" id="3.40.50.300:FF:000042">
    <property type="entry name" value="Maltose/maltodextrin ABC transporter, ATP-binding protein"/>
    <property type="match status" value="1"/>
</dbReference>
<dbReference type="Gene3D" id="2.40.50.100">
    <property type="match status" value="1"/>
</dbReference>
<dbReference type="Gene3D" id="2.40.50.140">
    <property type="entry name" value="Nucleic acid-binding proteins"/>
    <property type="match status" value="1"/>
</dbReference>
<dbReference type="Gene3D" id="3.40.50.300">
    <property type="entry name" value="P-loop containing nucleotide triphosphate hydrolases"/>
    <property type="match status" value="1"/>
</dbReference>
<dbReference type="InterPro" id="IPR003593">
    <property type="entry name" value="AAA+_ATPase"/>
</dbReference>
<dbReference type="InterPro" id="IPR050093">
    <property type="entry name" value="ABC_SmlMolc_Importer"/>
</dbReference>
<dbReference type="InterPro" id="IPR003439">
    <property type="entry name" value="ABC_transporter-like_ATP-bd"/>
</dbReference>
<dbReference type="InterPro" id="IPR017871">
    <property type="entry name" value="ABC_transporter-like_CS"/>
</dbReference>
<dbReference type="InterPro" id="IPR008995">
    <property type="entry name" value="Mo/tungstate-bd_C_term_dom"/>
</dbReference>
<dbReference type="InterPro" id="IPR012340">
    <property type="entry name" value="NA-bd_OB-fold"/>
</dbReference>
<dbReference type="InterPro" id="IPR027417">
    <property type="entry name" value="P-loop_NTPase"/>
</dbReference>
<dbReference type="InterPro" id="IPR017879">
    <property type="entry name" value="PotA_ATP-bd"/>
</dbReference>
<dbReference type="InterPro" id="IPR013611">
    <property type="entry name" value="Transp-assoc_OB_typ2"/>
</dbReference>
<dbReference type="PANTHER" id="PTHR42781">
    <property type="entry name" value="SPERMIDINE/PUTRESCINE IMPORT ATP-BINDING PROTEIN POTA"/>
    <property type="match status" value="1"/>
</dbReference>
<dbReference type="PANTHER" id="PTHR42781:SF4">
    <property type="entry name" value="SPERMIDINE_PUTRESCINE IMPORT ATP-BINDING PROTEIN POTA"/>
    <property type="match status" value="1"/>
</dbReference>
<dbReference type="Pfam" id="PF00005">
    <property type="entry name" value="ABC_tran"/>
    <property type="match status" value="1"/>
</dbReference>
<dbReference type="Pfam" id="PF08402">
    <property type="entry name" value="TOBE_2"/>
    <property type="match status" value="1"/>
</dbReference>
<dbReference type="SMART" id="SM00382">
    <property type="entry name" value="AAA"/>
    <property type="match status" value="1"/>
</dbReference>
<dbReference type="SUPFAM" id="SSF50331">
    <property type="entry name" value="MOP-like"/>
    <property type="match status" value="1"/>
</dbReference>
<dbReference type="SUPFAM" id="SSF52540">
    <property type="entry name" value="P-loop containing nucleoside triphosphate hydrolases"/>
    <property type="match status" value="1"/>
</dbReference>
<dbReference type="PROSITE" id="PS00211">
    <property type="entry name" value="ABC_TRANSPORTER_1"/>
    <property type="match status" value="1"/>
</dbReference>
<dbReference type="PROSITE" id="PS50893">
    <property type="entry name" value="ABC_TRANSPORTER_2"/>
    <property type="match status" value="1"/>
</dbReference>
<dbReference type="PROSITE" id="PS51305">
    <property type="entry name" value="POTA"/>
    <property type="match status" value="1"/>
</dbReference>
<gene>
    <name evidence="1" type="primary">potA</name>
    <name type="ordered locus">lmo0807</name>
</gene>
<sequence length="366" mass="41953">MIVTETIIRFENVTKQFDNDPPVLDNVSFEIEKGKFYTLLGPSGCGKTTILRLIAGFLEASKGQIYLGDKVINQIPANKRPVNTVFQDYALFPHLNVYENVAFGLRIKKLKKEAIDEKVKEALRFVNLKGYEKREISEMSGGQRQRVAIARAIVNEPEVILLDEPLSALDLKLRTEMQYELRDLQKRLGITFIFVTHDQEEALAMSDEIFVLNKGEIQQSGTPIDIYDEPINKFVADFIGESNIVNGKMIQDFEVEFVERRFECVDQGFRPNEVVEVVIRPEDLEITSAEKGQLQVTVDWMLFRGVHYEVGCIDIDGNEWLVHTTRKVRVGDKIGLAFEPEAIHVMRLGETEEEFDKRLDSYDEVQ</sequence>
<keyword id="KW-0067">ATP-binding</keyword>
<keyword id="KW-1003">Cell membrane</keyword>
<keyword id="KW-0472">Membrane</keyword>
<keyword id="KW-0547">Nucleotide-binding</keyword>
<keyword id="KW-1185">Reference proteome</keyword>
<keyword id="KW-1278">Translocase</keyword>
<keyword id="KW-0813">Transport</keyword>
<reference key="1">
    <citation type="journal article" date="2001" name="Science">
        <title>Comparative genomics of Listeria species.</title>
        <authorList>
            <person name="Glaser P."/>
            <person name="Frangeul L."/>
            <person name="Buchrieser C."/>
            <person name="Rusniok C."/>
            <person name="Amend A."/>
            <person name="Baquero F."/>
            <person name="Berche P."/>
            <person name="Bloecker H."/>
            <person name="Brandt P."/>
            <person name="Chakraborty T."/>
            <person name="Charbit A."/>
            <person name="Chetouani F."/>
            <person name="Couve E."/>
            <person name="de Daruvar A."/>
            <person name="Dehoux P."/>
            <person name="Domann E."/>
            <person name="Dominguez-Bernal G."/>
            <person name="Duchaud E."/>
            <person name="Durant L."/>
            <person name="Dussurget O."/>
            <person name="Entian K.-D."/>
            <person name="Fsihi H."/>
            <person name="Garcia-del Portillo F."/>
            <person name="Garrido P."/>
            <person name="Gautier L."/>
            <person name="Goebel W."/>
            <person name="Gomez-Lopez N."/>
            <person name="Hain T."/>
            <person name="Hauf J."/>
            <person name="Jackson D."/>
            <person name="Jones L.-M."/>
            <person name="Kaerst U."/>
            <person name="Kreft J."/>
            <person name="Kuhn M."/>
            <person name="Kunst F."/>
            <person name="Kurapkat G."/>
            <person name="Madueno E."/>
            <person name="Maitournam A."/>
            <person name="Mata Vicente J."/>
            <person name="Ng E."/>
            <person name="Nedjari H."/>
            <person name="Nordsiek G."/>
            <person name="Novella S."/>
            <person name="de Pablos B."/>
            <person name="Perez-Diaz J.-C."/>
            <person name="Purcell R."/>
            <person name="Remmel B."/>
            <person name="Rose M."/>
            <person name="Schlueter T."/>
            <person name="Simoes N."/>
            <person name="Tierrez A."/>
            <person name="Vazquez-Boland J.-A."/>
            <person name="Voss H."/>
            <person name="Wehland J."/>
            <person name="Cossart P."/>
        </authorList>
    </citation>
    <scope>NUCLEOTIDE SEQUENCE [LARGE SCALE GENOMIC DNA]</scope>
    <source>
        <strain>ATCC BAA-679 / EGD-e</strain>
    </source>
</reference>
<comment type="function">
    <text evidence="1">Part of the ABC transporter complex PotABCD involved in spermidine/putrescine import. Responsible for energy coupling to the transport system.</text>
</comment>
<comment type="catalytic activity">
    <reaction evidence="1">
        <text>ATP + H2O + polyamine-[polyamine-binding protein]Side 1 = ADP + phosphate + polyamineSide 2 + [polyamine-binding protein]Side 1.</text>
        <dbReference type="EC" id="7.6.2.11"/>
    </reaction>
</comment>
<comment type="subunit">
    <text evidence="1">The complex is composed of two ATP-binding proteins (PotA), two transmembrane proteins (PotB and PotC) and a solute-binding protein (PotD).</text>
</comment>
<comment type="subcellular location">
    <subcellularLocation>
        <location evidence="1">Cell membrane</location>
        <topology evidence="1">Peripheral membrane protein</topology>
    </subcellularLocation>
</comment>
<comment type="similarity">
    <text evidence="1">Belongs to the ABC transporter superfamily. Spermidine/putrescine importer (TC 3.A.1.11.1) family.</text>
</comment>
<comment type="sequence caution" evidence="2">
    <conflict type="erroneous initiation">
        <sequence resource="EMBL-CDS" id="CAC98885"/>
    </conflict>
</comment>
<accession>Q8Y8T6</accession>
<protein>
    <recommendedName>
        <fullName evidence="1">Spermidine/putrescine import ATP-binding protein PotA</fullName>
        <ecNumber evidence="1">7.6.2.11</ecNumber>
    </recommendedName>
</protein>
<evidence type="ECO:0000255" key="1">
    <source>
        <dbReference type="HAMAP-Rule" id="MF_01726"/>
    </source>
</evidence>
<evidence type="ECO:0000305" key="2"/>
<name>POTA_LISMO</name>
<proteinExistence type="inferred from homology"/>
<organism>
    <name type="scientific">Listeria monocytogenes serovar 1/2a (strain ATCC BAA-679 / EGD-e)</name>
    <dbReference type="NCBI Taxonomy" id="169963"/>
    <lineage>
        <taxon>Bacteria</taxon>
        <taxon>Bacillati</taxon>
        <taxon>Bacillota</taxon>
        <taxon>Bacilli</taxon>
        <taxon>Bacillales</taxon>
        <taxon>Listeriaceae</taxon>
        <taxon>Listeria</taxon>
    </lineage>
</organism>